<keyword id="KW-0496">Mitochondrion</keyword>
<protein>
    <recommendedName>
        <fullName>Uncharacterized 5.6 kDa protein in COX1 intron</fullName>
    </recommendedName>
    <alternativeName>
        <fullName>URF-F</fullName>
    </alternativeName>
</protein>
<proteinExistence type="predicted"/>
<sequence length="48" mass="5628">MDIIGSGFIRFKYNYIIIIIINIIPELMPLKSVNFLIITSLYAWKIPK</sequence>
<reference key="1">
    <citation type="journal article" date="1981" name="Cell">
        <title>Mitochondrial tRNA gene clusters in Aspergillus nidulans: organization and nucleotide sequence.</title>
        <authorList>
            <person name="Koechel H.G."/>
            <person name="Lazarus C.M."/>
            <person name="Basak N."/>
            <person name="Kuentzel H."/>
        </authorList>
    </citation>
    <scope>NUCLEOTIDE SEQUENCE [GENOMIC DNA]</scope>
    <source>
        <strain>pabaA1 biA1</strain>
    </source>
</reference>
<reference key="2">
    <citation type="journal article" date="1982" name="Nucleic Acids Res.">
        <title>Nucleotide sequence of Aspergillus nidulans mitochondrial genes coding for ATPase subunit 6, cytochrome oxidase subunit 3, seven unidentified proteins, four tRNAs and L-rRNA.</title>
        <authorList>
            <person name="Netzker R."/>
            <person name="Koechel H.G."/>
            <person name="Basak N."/>
            <person name="Kuentzel H."/>
        </authorList>
    </citation>
    <scope>NUCLEOTIDE SEQUENCE [GENOMIC DNA]</scope>
    <source>
        <strain>pabaA1 biA1</strain>
    </source>
</reference>
<evidence type="ECO:0000305" key="1"/>
<organism>
    <name type="scientific">Emericella nidulans</name>
    <name type="common">Aspergillus nidulans</name>
    <dbReference type="NCBI Taxonomy" id="162425"/>
    <lineage>
        <taxon>Eukaryota</taxon>
        <taxon>Fungi</taxon>
        <taxon>Dikarya</taxon>
        <taxon>Ascomycota</taxon>
        <taxon>Pezizomycotina</taxon>
        <taxon>Eurotiomycetes</taxon>
        <taxon>Eurotiomycetidae</taxon>
        <taxon>Eurotiales</taxon>
        <taxon>Aspergillaceae</taxon>
        <taxon>Aspergillus</taxon>
        <taxon>Aspergillus subgen. Nidulantes</taxon>
    </lineage>
</organism>
<geneLocation type="mitochondrion"/>
<accession>P03885</accession>
<comment type="subcellular location">
    <subcellularLocation>
        <location evidence="1">Mitochondrion</location>
    </subcellularLocation>
</comment>
<dbReference type="EMBL" id="J01390">
    <property type="protein sequence ID" value="AAA99211.1"/>
    <property type="molecule type" value="Genomic_DNA"/>
</dbReference>
<dbReference type="EMBL" id="X07795">
    <property type="protein sequence ID" value="CAA30642.1"/>
    <property type="molecule type" value="Genomic_DNA"/>
</dbReference>
<dbReference type="PIR" id="A04518">
    <property type="entry name" value="QXASF"/>
</dbReference>
<dbReference type="GO" id="GO:0005739">
    <property type="term" value="C:mitochondrion"/>
    <property type="evidence" value="ECO:0007669"/>
    <property type="project" value="UniProtKB-SubCell"/>
</dbReference>
<feature type="chain" id="PRO_0000196895" description="Uncharacterized 5.6 kDa protein in COX1 intron">
    <location>
        <begin position="1"/>
        <end position="48"/>
    </location>
</feature>
<name>YMCF_EMEND</name>